<reference key="1">
    <citation type="journal article" date="2010" name="PLoS ONE">
        <title>The complete multipartite genome sequence of Cupriavidus necator JMP134, a versatile pollutant degrader.</title>
        <authorList>
            <person name="Lykidis A."/>
            <person name="Perez-Pantoja D."/>
            <person name="Ledger T."/>
            <person name="Mavromatis K."/>
            <person name="Anderson I.J."/>
            <person name="Ivanova N.N."/>
            <person name="Hooper S.D."/>
            <person name="Lapidus A."/>
            <person name="Lucas S."/>
            <person name="Gonzalez B."/>
            <person name="Kyrpides N.C."/>
        </authorList>
    </citation>
    <scope>NUCLEOTIDE SEQUENCE [LARGE SCALE GENOMIC DNA]</scope>
    <source>
        <strain>JMP134 / LMG 1197</strain>
    </source>
</reference>
<name>PDXA_CUPPJ</name>
<organism>
    <name type="scientific">Cupriavidus pinatubonensis (strain JMP 134 / LMG 1197)</name>
    <name type="common">Cupriavidus necator (strain JMP 134)</name>
    <dbReference type="NCBI Taxonomy" id="264198"/>
    <lineage>
        <taxon>Bacteria</taxon>
        <taxon>Pseudomonadati</taxon>
        <taxon>Pseudomonadota</taxon>
        <taxon>Betaproteobacteria</taxon>
        <taxon>Burkholderiales</taxon>
        <taxon>Burkholderiaceae</taxon>
        <taxon>Cupriavidus</taxon>
    </lineage>
</organism>
<sequence length="347" mass="36297">MPDPLALAISTGEPAGIGPDITIGALLQLAGQNGHARYHVLGDAHLLASRAAALGVAHAWERRIAEGEVVIHHVPLAVACEPGRLDARNGPYVLSMLDAAIAGCRTHAGAPARFAAMVTAPVQKSTINDAGVPFTGHTEYLAEAAGVPRVVMMLAGPQPAHANAMLRVALATTHLPLRAVADAVTVPLLLETLSIIDADLRRWFGIARPRILVTGLNPHAGESGHMGREEINVIEPALAQARDAGIDARGPYPADTLFQPRHLRDADCVLAMYHDQGLAPLKYGTFGHGVNITLGLPFIRTSVDHGTALDLAGSGQAEHGSMIEAIRSAVTMAGHANGRHASARVPH</sequence>
<accession>Q475Q2</accession>
<feature type="chain" id="PRO_1000051510" description="4-hydroxythreonine-4-phosphate dehydrogenase">
    <location>
        <begin position="1"/>
        <end position="347"/>
    </location>
</feature>
<feature type="binding site" evidence="1">
    <location>
        <position position="137"/>
    </location>
    <ligand>
        <name>substrate</name>
    </ligand>
</feature>
<feature type="binding site" evidence="1">
    <location>
        <position position="138"/>
    </location>
    <ligand>
        <name>substrate</name>
    </ligand>
</feature>
<feature type="binding site" evidence="1">
    <location>
        <position position="174"/>
    </location>
    <ligand>
        <name>a divalent metal cation</name>
        <dbReference type="ChEBI" id="CHEBI:60240"/>
        <note>ligand shared between dimeric partners</note>
    </ligand>
</feature>
<feature type="binding site" evidence="1">
    <location>
        <position position="219"/>
    </location>
    <ligand>
        <name>a divalent metal cation</name>
        <dbReference type="ChEBI" id="CHEBI:60240"/>
        <note>ligand shared between dimeric partners</note>
    </ligand>
</feature>
<feature type="binding site" evidence="1">
    <location>
        <position position="274"/>
    </location>
    <ligand>
        <name>a divalent metal cation</name>
        <dbReference type="ChEBI" id="CHEBI:60240"/>
        <note>ligand shared between dimeric partners</note>
    </ligand>
</feature>
<feature type="binding site" evidence="1">
    <location>
        <position position="282"/>
    </location>
    <ligand>
        <name>substrate</name>
    </ligand>
</feature>
<feature type="binding site" evidence="1">
    <location>
        <position position="291"/>
    </location>
    <ligand>
        <name>substrate</name>
    </ligand>
</feature>
<feature type="binding site" evidence="1">
    <location>
        <position position="300"/>
    </location>
    <ligand>
        <name>substrate</name>
    </ligand>
</feature>
<proteinExistence type="inferred from homology"/>
<evidence type="ECO:0000255" key="1">
    <source>
        <dbReference type="HAMAP-Rule" id="MF_00536"/>
    </source>
</evidence>
<comment type="function">
    <text evidence="1">Catalyzes the NAD(P)-dependent oxidation of 4-(phosphooxy)-L-threonine (HTP) into 2-amino-3-oxo-4-(phosphooxy)butyric acid which spontaneously decarboxylates to form 3-amino-2-oxopropyl phosphate (AHAP).</text>
</comment>
<comment type="catalytic activity">
    <reaction evidence="1">
        <text>4-(phosphooxy)-L-threonine + NAD(+) = 3-amino-2-oxopropyl phosphate + CO2 + NADH</text>
        <dbReference type="Rhea" id="RHEA:32275"/>
        <dbReference type="ChEBI" id="CHEBI:16526"/>
        <dbReference type="ChEBI" id="CHEBI:57279"/>
        <dbReference type="ChEBI" id="CHEBI:57540"/>
        <dbReference type="ChEBI" id="CHEBI:57945"/>
        <dbReference type="ChEBI" id="CHEBI:58452"/>
        <dbReference type="EC" id="1.1.1.262"/>
    </reaction>
</comment>
<comment type="cofactor">
    <cofactor evidence="1">
        <name>Zn(2+)</name>
        <dbReference type="ChEBI" id="CHEBI:29105"/>
    </cofactor>
    <cofactor evidence="1">
        <name>Mg(2+)</name>
        <dbReference type="ChEBI" id="CHEBI:18420"/>
    </cofactor>
    <cofactor evidence="1">
        <name>Co(2+)</name>
        <dbReference type="ChEBI" id="CHEBI:48828"/>
    </cofactor>
    <text evidence="1">Binds 1 divalent metal cation per subunit. Can use ions such as Zn(2+), Mg(2+) or Co(2+).</text>
</comment>
<comment type="pathway">
    <text evidence="1">Cofactor biosynthesis; pyridoxine 5'-phosphate biosynthesis; pyridoxine 5'-phosphate from D-erythrose 4-phosphate: step 4/5.</text>
</comment>
<comment type="subunit">
    <text evidence="1">Homodimer.</text>
</comment>
<comment type="subcellular location">
    <subcellularLocation>
        <location evidence="1">Cytoplasm</location>
    </subcellularLocation>
</comment>
<comment type="miscellaneous">
    <text evidence="1">The active site is located at the dimer interface.</text>
</comment>
<comment type="similarity">
    <text evidence="1">Belongs to the PdxA family.</text>
</comment>
<protein>
    <recommendedName>
        <fullName evidence="1">4-hydroxythreonine-4-phosphate dehydrogenase</fullName>
        <ecNumber evidence="1">1.1.1.262</ecNumber>
    </recommendedName>
    <alternativeName>
        <fullName evidence="1">4-(phosphohydroxy)-L-threonine dehydrogenase</fullName>
    </alternativeName>
</protein>
<keyword id="KW-0170">Cobalt</keyword>
<keyword id="KW-0963">Cytoplasm</keyword>
<keyword id="KW-0460">Magnesium</keyword>
<keyword id="KW-0479">Metal-binding</keyword>
<keyword id="KW-0520">NAD</keyword>
<keyword id="KW-0521">NADP</keyword>
<keyword id="KW-0560">Oxidoreductase</keyword>
<keyword id="KW-0664">Pyridoxine biosynthesis</keyword>
<keyword id="KW-0862">Zinc</keyword>
<gene>
    <name evidence="1" type="primary">pdxA</name>
    <name type="ordered locus">Reut_A0499</name>
</gene>
<dbReference type="EC" id="1.1.1.262" evidence="1"/>
<dbReference type="EMBL" id="CP000090">
    <property type="protein sequence ID" value="AAZ59881.1"/>
    <property type="molecule type" value="Genomic_DNA"/>
</dbReference>
<dbReference type="SMR" id="Q475Q2"/>
<dbReference type="STRING" id="264198.Reut_A0499"/>
<dbReference type="KEGG" id="reu:Reut_A0499"/>
<dbReference type="eggNOG" id="COG1995">
    <property type="taxonomic scope" value="Bacteria"/>
</dbReference>
<dbReference type="HOGENOM" id="CLU_040168_1_0_4"/>
<dbReference type="OrthoDB" id="9801783at2"/>
<dbReference type="UniPathway" id="UPA00244">
    <property type="reaction ID" value="UER00312"/>
</dbReference>
<dbReference type="GO" id="GO:0005737">
    <property type="term" value="C:cytoplasm"/>
    <property type="evidence" value="ECO:0007669"/>
    <property type="project" value="UniProtKB-SubCell"/>
</dbReference>
<dbReference type="GO" id="GO:0050570">
    <property type="term" value="F:4-hydroxythreonine-4-phosphate dehydrogenase activity"/>
    <property type="evidence" value="ECO:0007669"/>
    <property type="project" value="UniProtKB-UniRule"/>
</dbReference>
<dbReference type="GO" id="GO:0050897">
    <property type="term" value="F:cobalt ion binding"/>
    <property type="evidence" value="ECO:0007669"/>
    <property type="project" value="UniProtKB-UniRule"/>
</dbReference>
<dbReference type="GO" id="GO:0000287">
    <property type="term" value="F:magnesium ion binding"/>
    <property type="evidence" value="ECO:0007669"/>
    <property type="project" value="UniProtKB-UniRule"/>
</dbReference>
<dbReference type="GO" id="GO:0051287">
    <property type="term" value="F:NAD binding"/>
    <property type="evidence" value="ECO:0007669"/>
    <property type="project" value="InterPro"/>
</dbReference>
<dbReference type="GO" id="GO:0008270">
    <property type="term" value="F:zinc ion binding"/>
    <property type="evidence" value="ECO:0007669"/>
    <property type="project" value="UniProtKB-UniRule"/>
</dbReference>
<dbReference type="GO" id="GO:0042823">
    <property type="term" value="P:pyridoxal phosphate biosynthetic process"/>
    <property type="evidence" value="ECO:0007669"/>
    <property type="project" value="UniProtKB-UniRule"/>
</dbReference>
<dbReference type="GO" id="GO:0008615">
    <property type="term" value="P:pyridoxine biosynthetic process"/>
    <property type="evidence" value="ECO:0007669"/>
    <property type="project" value="UniProtKB-UniRule"/>
</dbReference>
<dbReference type="Gene3D" id="3.40.718.10">
    <property type="entry name" value="Isopropylmalate Dehydrogenase"/>
    <property type="match status" value="1"/>
</dbReference>
<dbReference type="HAMAP" id="MF_00536">
    <property type="entry name" value="PdxA"/>
    <property type="match status" value="1"/>
</dbReference>
<dbReference type="InterPro" id="IPR037510">
    <property type="entry name" value="PdxA"/>
</dbReference>
<dbReference type="InterPro" id="IPR005255">
    <property type="entry name" value="PdxA_fam"/>
</dbReference>
<dbReference type="NCBIfam" id="TIGR00557">
    <property type="entry name" value="pdxA"/>
    <property type="match status" value="1"/>
</dbReference>
<dbReference type="NCBIfam" id="NF002520">
    <property type="entry name" value="PRK01909.1"/>
    <property type="match status" value="1"/>
</dbReference>
<dbReference type="PANTHER" id="PTHR30004">
    <property type="entry name" value="4-HYDROXYTHREONINE-4-PHOSPHATE DEHYDROGENASE"/>
    <property type="match status" value="1"/>
</dbReference>
<dbReference type="PANTHER" id="PTHR30004:SF5">
    <property type="entry name" value="4-HYDROXYTHREONINE-4-PHOSPHATE DEHYDROGENASE"/>
    <property type="match status" value="1"/>
</dbReference>
<dbReference type="Pfam" id="PF04166">
    <property type="entry name" value="PdxA"/>
    <property type="match status" value="1"/>
</dbReference>
<dbReference type="SUPFAM" id="SSF53659">
    <property type="entry name" value="Isocitrate/Isopropylmalate dehydrogenase-like"/>
    <property type="match status" value="1"/>
</dbReference>